<name>TSP_MOUSE</name>
<evidence type="ECO:0000255" key="1"/>
<evidence type="ECO:0000256" key="2">
    <source>
        <dbReference type="SAM" id="MobiDB-lite"/>
    </source>
</evidence>
<evidence type="ECO:0000305" key="3"/>
<organism>
    <name type="scientific">Mus musculus</name>
    <name type="common">Mouse</name>
    <dbReference type="NCBI Taxonomy" id="10090"/>
    <lineage>
        <taxon>Eukaryota</taxon>
        <taxon>Metazoa</taxon>
        <taxon>Chordata</taxon>
        <taxon>Craniata</taxon>
        <taxon>Vertebrata</taxon>
        <taxon>Euteleostomi</taxon>
        <taxon>Mammalia</taxon>
        <taxon>Eutheria</taxon>
        <taxon>Euarchontoglires</taxon>
        <taxon>Glires</taxon>
        <taxon>Rodentia</taxon>
        <taxon>Myomorpha</taxon>
        <taxon>Muroidea</taxon>
        <taxon>Muridae</taxon>
        <taxon>Murinae</taxon>
        <taxon>Mus</taxon>
        <taxon>Mus</taxon>
    </lineage>
</organism>
<keyword id="KW-1185">Reference proteome</keyword>
<keyword id="KW-0964">Secreted</keyword>
<keyword id="KW-0732">Signal</keyword>
<proteinExistence type="evidence at transcript level"/>
<sequence length="124" mass="13948">MTPTIFLVILCLGVASAVIVPEAQLDAELQEQKDKEVLIKAVWSKFMKTNKLHSSENDQETEGSNIEMSASGQLTDEELMKIMTTVLHPMFEEEENKPQPVVDDPEFEDYTESGDGFFVPNQPQ</sequence>
<accession>P13438</accession>
<protein>
    <recommendedName>
        <fullName>Trophoblast-specific protein alpha</fullName>
    </recommendedName>
</protein>
<dbReference type="EMBL" id="X17071">
    <property type="protein sequence ID" value="CAA34917.1"/>
    <property type="molecule type" value="mRNA"/>
</dbReference>
<dbReference type="CCDS" id="CCDS36693.1"/>
<dbReference type="PIR" id="A30043">
    <property type="entry name" value="A30043"/>
</dbReference>
<dbReference type="SMR" id="P13438"/>
<dbReference type="STRING" id="10090.ENSMUSP00000021885"/>
<dbReference type="PaxDb" id="10090-ENSMUSP00000021885"/>
<dbReference type="AGR" id="MGI:98795"/>
<dbReference type="MGI" id="MGI:98795">
    <property type="gene designation" value="Tpbpa"/>
</dbReference>
<dbReference type="InParanoid" id="P13438"/>
<dbReference type="OrthoDB" id="9631170at2759"/>
<dbReference type="PhylomeDB" id="P13438"/>
<dbReference type="ChiTaRS" id="Tpbpa">
    <property type="organism name" value="mouse"/>
</dbReference>
<dbReference type="PRO" id="PR:P13438"/>
<dbReference type="Proteomes" id="UP000000589">
    <property type="component" value="Unplaced"/>
</dbReference>
<dbReference type="RNAct" id="P13438">
    <property type="molecule type" value="protein"/>
</dbReference>
<dbReference type="GO" id="GO:0005576">
    <property type="term" value="C:extracellular region"/>
    <property type="evidence" value="ECO:0007669"/>
    <property type="project" value="UniProtKB-SubCell"/>
</dbReference>
<dbReference type="GO" id="GO:0007254">
    <property type="term" value="P:JNK cascade"/>
    <property type="evidence" value="ECO:0000314"/>
    <property type="project" value="MGI"/>
</dbReference>
<gene>
    <name type="primary">Tpbpa</name>
    <name type="synonym">Tpbp</name>
</gene>
<reference key="1">
    <citation type="journal article" date="1988" name="Genes Dev.">
        <title>Isolation and characterization of a novel trophoblast-specific cDNA in the mouse.</title>
        <authorList>
            <person name="Lescisin K.R."/>
            <person name="Varmuza S."/>
            <person name="Rossant J."/>
        </authorList>
    </citation>
    <scope>NUCLEOTIDE SEQUENCE [MRNA]</scope>
    <source>
        <strain>CD-1</strain>
    </source>
</reference>
<feature type="signal peptide" evidence="1">
    <location>
        <begin position="1"/>
        <end position="18"/>
    </location>
</feature>
<feature type="chain" id="PRO_0000022600" description="Trophoblast-specific protein alpha">
    <location>
        <begin position="19"/>
        <end position="124"/>
    </location>
</feature>
<feature type="region of interest" description="Disordered" evidence="2">
    <location>
        <begin position="51"/>
        <end position="74"/>
    </location>
</feature>
<feature type="region of interest" description="Disordered" evidence="2">
    <location>
        <begin position="91"/>
        <end position="124"/>
    </location>
</feature>
<feature type="compositionally biased region" description="Polar residues" evidence="2">
    <location>
        <begin position="62"/>
        <end position="74"/>
    </location>
</feature>
<feature type="compositionally biased region" description="Acidic residues" evidence="2">
    <location>
        <begin position="103"/>
        <end position="112"/>
    </location>
</feature>
<comment type="function">
    <text>It may be a growth factor/hormone, perhaps involved in interaction between the maternal and fetal systems in maintenance of pregnancy.</text>
</comment>
<comment type="subcellular location">
    <subcellularLocation>
        <location evidence="3">Secreted</location>
        <location evidence="3">Extracellular space</location>
    </subcellularLocation>
</comment>